<reference key="1">
    <citation type="journal article" date="2007" name="Circ. Res.">
        <title>Association of ATP1A1 and dear single-nucleotide polymorphism haplotypes with essential hypertension: sex-specific and haplotype-specific effects.</title>
        <authorList>
            <person name="Glorioso N."/>
            <person name="Herrera V.L."/>
            <person name="Bagamasbad P."/>
            <person name="Filigheddu F."/>
            <person name="Troffa C."/>
            <person name="Argiolas G."/>
            <person name="Bulla E."/>
            <person name="Decano J.L."/>
            <person name="Ruiz-Opazo N."/>
        </authorList>
    </citation>
    <scope>NUCLEOTIDE SEQUENCE [MRNA]</scope>
    <scope>FUNCTION</scope>
    <scope>TISSUE SPECIFICITY</scope>
    <source>
        <tissue evidence="7">Kidney</tissue>
    </source>
</reference>
<reference key="2">
    <citation type="journal article" date="2005" name="Nature">
        <title>Generation and annotation of the DNA sequences of human chromosomes 2 and 4.</title>
        <authorList>
            <person name="Hillier L.W."/>
            <person name="Graves T.A."/>
            <person name="Fulton R.S."/>
            <person name="Fulton L.A."/>
            <person name="Pepin K.H."/>
            <person name="Minx P."/>
            <person name="Wagner-McPherson C."/>
            <person name="Layman D."/>
            <person name="Wylie K."/>
            <person name="Sekhon M."/>
            <person name="Becker M.C."/>
            <person name="Fewell G.A."/>
            <person name="Delehaunty K.D."/>
            <person name="Miner T.L."/>
            <person name="Nash W.E."/>
            <person name="Kremitzki C."/>
            <person name="Oddy L."/>
            <person name="Du H."/>
            <person name="Sun H."/>
            <person name="Bradshaw-Cordum H."/>
            <person name="Ali J."/>
            <person name="Carter J."/>
            <person name="Cordes M."/>
            <person name="Harris A."/>
            <person name="Isak A."/>
            <person name="van Brunt A."/>
            <person name="Nguyen C."/>
            <person name="Du F."/>
            <person name="Courtney L."/>
            <person name="Kalicki J."/>
            <person name="Ozersky P."/>
            <person name="Abbott S."/>
            <person name="Armstrong J."/>
            <person name="Belter E.A."/>
            <person name="Caruso L."/>
            <person name="Cedroni M."/>
            <person name="Cotton M."/>
            <person name="Davidson T."/>
            <person name="Desai A."/>
            <person name="Elliott G."/>
            <person name="Erb T."/>
            <person name="Fronick C."/>
            <person name="Gaige T."/>
            <person name="Haakenson W."/>
            <person name="Haglund K."/>
            <person name="Holmes A."/>
            <person name="Harkins R."/>
            <person name="Kim K."/>
            <person name="Kruchowski S.S."/>
            <person name="Strong C.M."/>
            <person name="Grewal N."/>
            <person name="Goyea E."/>
            <person name="Hou S."/>
            <person name="Levy A."/>
            <person name="Martinka S."/>
            <person name="Mead K."/>
            <person name="McLellan M.D."/>
            <person name="Meyer R."/>
            <person name="Randall-Maher J."/>
            <person name="Tomlinson C."/>
            <person name="Dauphin-Kohlberg S."/>
            <person name="Kozlowicz-Reilly A."/>
            <person name="Shah N."/>
            <person name="Swearengen-Shahid S."/>
            <person name="Snider J."/>
            <person name="Strong J.T."/>
            <person name="Thompson J."/>
            <person name="Yoakum M."/>
            <person name="Leonard S."/>
            <person name="Pearman C."/>
            <person name="Trani L."/>
            <person name="Radionenko M."/>
            <person name="Waligorski J.E."/>
            <person name="Wang C."/>
            <person name="Rock S.M."/>
            <person name="Tin-Wollam A.-M."/>
            <person name="Maupin R."/>
            <person name="Latreille P."/>
            <person name="Wendl M.C."/>
            <person name="Yang S.-P."/>
            <person name="Pohl C."/>
            <person name="Wallis J.W."/>
            <person name="Spieth J."/>
            <person name="Bieri T.A."/>
            <person name="Berkowicz N."/>
            <person name="Nelson J.O."/>
            <person name="Osborne J."/>
            <person name="Ding L."/>
            <person name="Meyer R."/>
            <person name="Sabo A."/>
            <person name="Shotland Y."/>
            <person name="Sinha P."/>
            <person name="Wohldmann P.E."/>
            <person name="Cook L.L."/>
            <person name="Hickenbotham M.T."/>
            <person name="Eldred J."/>
            <person name="Williams D."/>
            <person name="Jones T.A."/>
            <person name="She X."/>
            <person name="Ciccarelli F.D."/>
            <person name="Izaurralde E."/>
            <person name="Taylor J."/>
            <person name="Schmutz J."/>
            <person name="Myers R.M."/>
            <person name="Cox D.R."/>
            <person name="Huang X."/>
            <person name="McPherson J.D."/>
            <person name="Mardis E.R."/>
            <person name="Clifton S.W."/>
            <person name="Warren W.C."/>
            <person name="Chinwalla A.T."/>
            <person name="Eddy S.R."/>
            <person name="Marra M.A."/>
            <person name="Ovcharenko I."/>
            <person name="Furey T.S."/>
            <person name="Miller W."/>
            <person name="Eichler E.E."/>
            <person name="Bork P."/>
            <person name="Suyama M."/>
            <person name="Torrents D."/>
            <person name="Waterston R.H."/>
            <person name="Wilson R.K."/>
        </authorList>
    </citation>
    <scope>NUCLEOTIDE SEQUENCE [LARGE SCALE GENOMIC DNA]</scope>
</reference>
<reference key="3">
    <citation type="journal article" date="2014" name="PLoS ONE">
        <title>DEspR roles in tumor vasculo-angiogenesis, invasiveness, CSC-survival and anoikis resistance: a 'common receptor coordinator' paradigm.</title>
        <authorList>
            <person name="Herrera V.L."/>
            <person name="Decano J.L."/>
            <person name="Tan G.A."/>
            <person name="Moran A.M."/>
            <person name="Pasion K.A."/>
            <person name="Matsubara Y."/>
            <person name="Ruiz-Opazo N."/>
        </authorList>
    </citation>
    <scope>FUNCTION</scope>
    <scope>SUBCELLULAR LOCATION</scope>
    <scope>TISSUE SPECIFICITY</scope>
</reference>
<reference key="4">
    <citation type="journal article" date="2014" name="PLoS ONE">
        <authorList>
            <person name="Herrera V.L."/>
            <person name="Decano J.L."/>
            <person name="Tan G.A."/>
            <person name="Moran A.M."/>
            <person name="Pasion K.A."/>
            <person name="Matsubara Y."/>
            <person name="Ruiz-Opazo N."/>
        </authorList>
    </citation>
    <scope>ERRATUM OF PUBMED:24465725</scope>
</reference>
<reference key="5">
    <citation type="journal article" date="2016" name="BMC Mol. Biol.">
        <title>Confirmation of translatability and functionality certifies the dual endothelin1/VEGFsp receptor (DEspR) protein.</title>
        <authorList>
            <person name="Herrera V.L."/>
            <person name="Steffen M."/>
            <person name="Moran A.M."/>
            <person name="Tan G.A."/>
            <person name="Pasion K.A."/>
            <person name="Rivera K."/>
            <person name="Pappin D.J."/>
            <person name="Ruiz-Opazo N."/>
        </authorList>
    </citation>
    <scope>SUBCELLULAR LOCATION</scope>
    <scope>GLYCOSYLATION</scope>
    <scope>TOPOLOGY</scope>
</reference>
<reference key="6">
    <citation type="journal article" date="2021" name="BMC Cancer">
        <title>Humanized anti-DEspR IgG4S228P antibody increases overall survival in a pancreatic cancer stem cell-xenograft peritoneal carcinomatosis ratnu/nu model.</title>
        <authorList>
            <person name="Gromisch C.M."/>
            <person name="Tan G.L.A."/>
            <person name="Pasion K.A."/>
            <person name="Moran A.M."/>
            <person name="Gromisch M.S."/>
            <person name="Grinstaff M.W."/>
            <person name="Carr F.J."/>
            <person name="Herrera V.L.M."/>
            <person name="Ruiz-Opazo N."/>
        </authorList>
    </citation>
    <scope>SUBCELLULAR LOCATION</scope>
    <scope>RNA EDITING</scope>
</reference>
<evidence type="ECO:0000250" key="1">
    <source>
        <dbReference type="UniProtKB" id="Q2QKR2"/>
    </source>
</evidence>
<evidence type="ECO:0000255" key="2"/>
<evidence type="ECO:0000269" key="3">
    <source>
    </source>
</evidence>
<evidence type="ECO:0000269" key="4">
    <source>
    </source>
</evidence>
<evidence type="ECO:0000269" key="5">
    <source>
    </source>
</evidence>
<evidence type="ECO:0000269" key="6">
    <source>
    </source>
</evidence>
<evidence type="ECO:0000303" key="7">
    <source>
    </source>
</evidence>
<evidence type="ECO:0000303" key="8">
    <source>
    </source>
</evidence>
<evidence type="ECO:0000305" key="9">
    <source>
    </source>
</evidence>
<evidence type="ECO:0000305" key="10">
    <source>
    </source>
</evidence>
<evidence type="ECO:0000312" key="11">
    <source>
        <dbReference type="HGNC" id="HGNC:52397"/>
    </source>
</evidence>
<keyword id="KW-1003">Cell membrane</keyword>
<keyword id="KW-0472">Membrane</keyword>
<keyword id="KW-0675">Receptor</keyword>
<keyword id="KW-1185">Reference proteome</keyword>
<keyword id="KW-0691">RNA editing</keyword>
<keyword id="KW-0812">Transmembrane</keyword>
<keyword id="KW-1133">Transmembrane helix</keyword>
<gene>
    <name evidence="11" type="primary">FBXW7-AS1</name>
    <name evidence="7" type="synonym">DEAR</name>
    <name evidence="8" type="synonym">DEspR</name>
</gene>
<protein>
    <recommendedName>
        <fullName evidence="8">Dual endothelin-1/VEGF signal peptide receptor</fullName>
        <shortName evidence="8">DEspR protein</shortName>
        <shortName evidence="8">Dual endothelin-1/VEGFsp receptor</shortName>
    </recommendedName>
    <alternativeName>
        <fullName>FBXW7 antisense RNA 1</fullName>
    </alternativeName>
</protein>
<accession>B0L3A2</accession>
<organism>
    <name type="scientific">Homo sapiens</name>
    <name type="common">Human</name>
    <dbReference type="NCBI Taxonomy" id="9606"/>
    <lineage>
        <taxon>Eukaryota</taxon>
        <taxon>Metazoa</taxon>
        <taxon>Chordata</taxon>
        <taxon>Craniata</taxon>
        <taxon>Vertebrata</taxon>
        <taxon>Euteleostomi</taxon>
        <taxon>Mammalia</taxon>
        <taxon>Eutheria</taxon>
        <taxon>Euarchontoglires</taxon>
        <taxon>Primates</taxon>
        <taxon>Haplorrhini</taxon>
        <taxon>Catarrhini</taxon>
        <taxon>Hominidae</taxon>
        <taxon>Homo</taxon>
    </lineage>
</organism>
<dbReference type="EMBL" id="EF212178">
    <property type="protein sequence ID" value="ABP04239.1"/>
    <property type="molecule type" value="mRNA"/>
</dbReference>
<dbReference type="EMBL" id="AC080078">
    <property type="status" value="NOT_ANNOTATED_CDS"/>
    <property type="molecule type" value="Genomic_DNA"/>
</dbReference>
<dbReference type="FunCoup" id="B0L3A2">
    <property type="interactions" value="20"/>
</dbReference>
<dbReference type="AGR" id="HGNC:52397"/>
<dbReference type="GeneCards" id="FBXW7-AS1"/>
<dbReference type="HGNC" id="HGNC:52397">
    <property type="gene designation" value="FBXW7-AS1"/>
</dbReference>
<dbReference type="neXtProt" id="NX_B0L3A2"/>
<dbReference type="InParanoid" id="B0L3A2"/>
<dbReference type="PRO" id="PR:B0L3A2"/>
<dbReference type="Proteomes" id="UP000005640">
    <property type="component" value="Unplaced"/>
</dbReference>
<dbReference type="GO" id="GO:0005886">
    <property type="term" value="C:plasma membrane"/>
    <property type="evidence" value="ECO:0000314"/>
    <property type="project" value="UniProtKB"/>
</dbReference>
<dbReference type="GO" id="GO:0004962">
    <property type="term" value="F:endothelin receptor activity"/>
    <property type="evidence" value="ECO:0000314"/>
    <property type="project" value="UniProtKB"/>
</dbReference>
<dbReference type="GO" id="GO:0038085">
    <property type="term" value="F:vascular endothelial growth factor binding"/>
    <property type="evidence" value="ECO:0000314"/>
    <property type="project" value="UniProtKB"/>
</dbReference>
<dbReference type="GO" id="GO:0086100">
    <property type="term" value="P:endothelin receptor signaling pathway"/>
    <property type="evidence" value="ECO:0000314"/>
    <property type="project" value="UniProtKB"/>
</dbReference>
<dbReference type="GO" id="GO:0038084">
    <property type="term" value="P:vascular endothelial growth factor signaling pathway"/>
    <property type="evidence" value="ECO:0000314"/>
    <property type="project" value="UniProtKB"/>
</dbReference>
<sequence length="85" mass="9677">MTMFKGSNEMKSRWNWGSITCIICFTCVGSQLSMSSSKASNFSGPLQLYQRELEIFIVLTDVPNYRLIKENSHLHTTIVDQGRTV</sequence>
<name>DESPR_HUMAN</name>
<proteinExistence type="evidence at protein level"/>
<comment type="function">
    <text evidence="1 3 4">Dual receptor for both endothelin-1 and the signal sequence of vascular endothelial growth factor A (PubMed:17446437, PubMed:24465725). Does not act as a receptor for angiotensin-2 (PubMed:17446437). Does not bind the VEGFA mature protein (By similarity). May play a role in angiogenesis with a significant role in cardiovascular and neural development (By similarity).</text>
</comment>
<comment type="subcellular location">
    <subcellularLocation>
        <location evidence="4 5 6">Cell membrane</location>
        <topology evidence="10">Single-pass membrane protein</topology>
    </subcellularLocation>
</comment>
<comment type="tissue specificity">
    <text evidence="3 4">Expressed in kidney (PubMed:17446437). Expressed in endothelial cells (PubMed:24465725).</text>
</comment>
<comment type="PTM">
    <text evidence="5">N-glycosylated.</text>
</comment>
<comment type="RNA editing">
    <location>
        <position position="14" evidence="6"/>
    </location>
    <text evidence="6">The nonsense codon (UGA) at position 14 is modified to a sense codon (UGI), which is the equivalent of UGG. ADAR is responsible of FBXW7-AS1 expression and RNA-editing.</text>
</comment>
<comment type="caution">
    <text evidence="9">Was shown to act as a dual endothelin-1/angiotensin-2 receptor in the rat Dahl salt-sensitive strain. However, in the rat Dahl salt-resistant strain and in other species including human and mouse, functions as a dual endothelin-1/VEGF signal peptide receptor and does not act as an angiotensin-2 receptor.</text>
</comment>
<feature type="chain" id="PRO_0000452831" description="Dual endothelin-1/VEGF signal peptide receptor">
    <location>
        <begin position="1"/>
        <end position="85"/>
    </location>
</feature>
<feature type="topological domain" description="Extracellular" evidence="5">
    <location>
        <begin position="1"/>
        <end position="18"/>
    </location>
</feature>
<feature type="transmembrane region" description="Helical" evidence="2">
    <location>
        <begin position="19"/>
        <end position="37"/>
    </location>
</feature>
<feature type="topological domain" description="Cytoplasmic" evidence="10">
    <location>
        <begin position="38"/>
        <end position="85"/>
    </location>
</feature>